<feature type="chain" id="PRO_0000068395" description="Mobilization protein MobS">
    <location>
        <begin position="1"/>
        <end position="98"/>
    </location>
</feature>
<organism>
    <name type="scientific">Acidithiobacillus ferridurans</name>
    <dbReference type="NCBI Taxonomy" id="1232575"/>
    <lineage>
        <taxon>Bacteria</taxon>
        <taxon>Pseudomonadati</taxon>
        <taxon>Pseudomonadota</taxon>
        <taxon>Acidithiobacillia</taxon>
        <taxon>Acidithiobacillales</taxon>
        <taxon>Acidithiobacillaceae</taxon>
        <taxon>Acidithiobacillus</taxon>
    </lineage>
</organism>
<protein>
    <recommendedName>
        <fullName>Mobilization protein MobS</fullName>
    </recommendedName>
</protein>
<keyword id="KW-0184">Conjugation</keyword>
<keyword id="KW-0499">Mobility protein</keyword>
<keyword id="KW-0614">Plasmid</keyword>
<dbReference type="EMBL" id="X52699">
    <property type="protein sequence ID" value="CAA36926.1"/>
    <property type="molecule type" value="Genomic_DNA"/>
</dbReference>
<dbReference type="PIR" id="S12189">
    <property type="entry name" value="S12189"/>
</dbReference>
<dbReference type="SMR" id="P20086"/>
<proteinExistence type="predicted"/>
<geneLocation type="plasmid">
    <name>pTF1</name>
</geneLocation>
<name>MOBS_ACIFI</name>
<accession>P20086</accession>
<reference key="1">
    <citation type="journal article" date="1990" name="Mol. Microbiol.">
        <title>The mobilization and origin of transfer regions of a Thiobacillus ferrooxidans plasmid: relatedness to plasmids RSF1010 and pSC101.</title>
        <authorList>
            <person name="Drolet M."/>
            <person name="Zanga P."/>
            <person name="Lau P.C.K."/>
        </authorList>
    </citation>
    <scope>NUCLEOTIDE SEQUENCE [GENOMIC DNA]</scope>
    <source>
        <strain>ATCC 33020 / DSM 29468 / JCM 18981 / 11Fe</strain>
    </source>
</reference>
<gene>
    <name type="primary">mobS</name>
</gene>
<comment type="function">
    <text>This protein is essential to promote the specific transfer of the plasmid in the presence of conjugative plasmids.</text>
</comment>
<sequence>MASFEEKIAAAEKRAQEAAKQVKQLKAKRDMVEARKLQSLLKGQRSDDTRRKILVGALVLDMMERDESTRQRFMDRLDKYLTRADDRALFQLPIPEEK</sequence>